<dbReference type="EC" id="4.3.3.6" evidence="1"/>
<dbReference type="EC" id="3.5.1.2" evidence="1"/>
<dbReference type="EMBL" id="CP000812">
    <property type="protein sequence ID" value="ABV34324.1"/>
    <property type="status" value="ALT_INIT"/>
    <property type="molecule type" value="Genomic_DNA"/>
</dbReference>
<dbReference type="RefSeq" id="WP_028843718.1">
    <property type="nucleotide sequence ID" value="NZ_BSDV01000001.1"/>
</dbReference>
<dbReference type="SMR" id="A8F840"/>
<dbReference type="STRING" id="416591.Tlet_1770"/>
<dbReference type="MEROPS" id="C26.A32"/>
<dbReference type="KEGG" id="tle:Tlet_1770"/>
<dbReference type="eggNOG" id="COG0311">
    <property type="taxonomic scope" value="Bacteria"/>
</dbReference>
<dbReference type="HOGENOM" id="CLU_069674_2_0_0"/>
<dbReference type="UniPathway" id="UPA00245"/>
<dbReference type="Proteomes" id="UP000002016">
    <property type="component" value="Chromosome"/>
</dbReference>
<dbReference type="GO" id="GO:0005829">
    <property type="term" value="C:cytosol"/>
    <property type="evidence" value="ECO:0007669"/>
    <property type="project" value="TreeGrafter"/>
</dbReference>
<dbReference type="GO" id="GO:1903600">
    <property type="term" value="C:glutaminase complex"/>
    <property type="evidence" value="ECO:0007669"/>
    <property type="project" value="TreeGrafter"/>
</dbReference>
<dbReference type="GO" id="GO:0004359">
    <property type="term" value="F:glutaminase activity"/>
    <property type="evidence" value="ECO:0007669"/>
    <property type="project" value="UniProtKB-UniRule"/>
</dbReference>
<dbReference type="GO" id="GO:0036381">
    <property type="term" value="F:pyridoxal 5'-phosphate synthase (glutamine hydrolysing) activity"/>
    <property type="evidence" value="ECO:0007669"/>
    <property type="project" value="UniProtKB-UniRule"/>
</dbReference>
<dbReference type="GO" id="GO:0006543">
    <property type="term" value="P:glutamine catabolic process"/>
    <property type="evidence" value="ECO:0007669"/>
    <property type="project" value="UniProtKB-UniRule"/>
</dbReference>
<dbReference type="GO" id="GO:0042823">
    <property type="term" value="P:pyridoxal phosphate biosynthetic process"/>
    <property type="evidence" value="ECO:0007669"/>
    <property type="project" value="UniProtKB-UniRule"/>
</dbReference>
<dbReference type="GO" id="GO:0008614">
    <property type="term" value="P:pyridoxine metabolic process"/>
    <property type="evidence" value="ECO:0007669"/>
    <property type="project" value="TreeGrafter"/>
</dbReference>
<dbReference type="CDD" id="cd01749">
    <property type="entry name" value="GATase1_PB"/>
    <property type="match status" value="1"/>
</dbReference>
<dbReference type="FunFam" id="3.40.50.880:FF:000010">
    <property type="entry name" value="uncharacterized protein LOC100176842 isoform X2"/>
    <property type="match status" value="1"/>
</dbReference>
<dbReference type="Gene3D" id="3.40.50.880">
    <property type="match status" value="1"/>
</dbReference>
<dbReference type="HAMAP" id="MF_01615">
    <property type="entry name" value="PdxT"/>
    <property type="match status" value="1"/>
</dbReference>
<dbReference type="InterPro" id="IPR029062">
    <property type="entry name" value="Class_I_gatase-like"/>
</dbReference>
<dbReference type="InterPro" id="IPR002161">
    <property type="entry name" value="PdxT/SNO"/>
</dbReference>
<dbReference type="InterPro" id="IPR021196">
    <property type="entry name" value="PdxT/SNO_CS"/>
</dbReference>
<dbReference type="NCBIfam" id="TIGR03800">
    <property type="entry name" value="PLP_synth_Pdx2"/>
    <property type="match status" value="1"/>
</dbReference>
<dbReference type="PANTHER" id="PTHR31559">
    <property type="entry name" value="PYRIDOXAL 5'-PHOSPHATE SYNTHASE SUBUNIT SNO"/>
    <property type="match status" value="1"/>
</dbReference>
<dbReference type="PANTHER" id="PTHR31559:SF0">
    <property type="entry name" value="PYRIDOXAL 5'-PHOSPHATE SYNTHASE SUBUNIT SNO1-RELATED"/>
    <property type="match status" value="1"/>
</dbReference>
<dbReference type="Pfam" id="PF01174">
    <property type="entry name" value="SNO"/>
    <property type="match status" value="1"/>
</dbReference>
<dbReference type="PIRSF" id="PIRSF005639">
    <property type="entry name" value="Glut_amidoT_SNO"/>
    <property type="match status" value="1"/>
</dbReference>
<dbReference type="SUPFAM" id="SSF52317">
    <property type="entry name" value="Class I glutamine amidotransferase-like"/>
    <property type="match status" value="1"/>
</dbReference>
<dbReference type="PROSITE" id="PS01236">
    <property type="entry name" value="PDXT_SNO_1"/>
    <property type="match status" value="1"/>
</dbReference>
<dbReference type="PROSITE" id="PS51130">
    <property type="entry name" value="PDXT_SNO_2"/>
    <property type="match status" value="1"/>
</dbReference>
<accession>A8F840</accession>
<sequence length="195" mass="21641">MTIGVLGLQGDFREHLWALQKLQVETIVVKTVEDLRKTKGLIIPGGESTTIGKLARLTGIADELEKLVDQDFPIYGTCAGMILLAKQIVNYPYQYSFGFMDIVVERNAYGRQVESFEVNLDIPSTGGLFKAIFIRAPKIVEWGEGVEVLARYGDSPVLVRQGNLLASSFHPELGQDLRIHKYFLEMAGVKHAGIC</sequence>
<evidence type="ECO:0000255" key="1">
    <source>
        <dbReference type="HAMAP-Rule" id="MF_01615"/>
    </source>
</evidence>
<evidence type="ECO:0000305" key="2"/>
<proteinExistence type="inferred from homology"/>
<comment type="function">
    <text evidence="1">Catalyzes the hydrolysis of glutamine to glutamate and ammonia as part of the biosynthesis of pyridoxal 5'-phosphate. The resulting ammonia molecule is channeled to the active site of PdxS.</text>
</comment>
<comment type="catalytic activity">
    <reaction evidence="1">
        <text>aldehydo-D-ribose 5-phosphate + D-glyceraldehyde 3-phosphate + L-glutamine = pyridoxal 5'-phosphate + L-glutamate + phosphate + 3 H2O + H(+)</text>
        <dbReference type="Rhea" id="RHEA:31507"/>
        <dbReference type="ChEBI" id="CHEBI:15377"/>
        <dbReference type="ChEBI" id="CHEBI:15378"/>
        <dbReference type="ChEBI" id="CHEBI:29985"/>
        <dbReference type="ChEBI" id="CHEBI:43474"/>
        <dbReference type="ChEBI" id="CHEBI:58273"/>
        <dbReference type="ChEBI" id="CHEBI:58359"/>
        <dbReference type="ChEBI" id="CHEBI:59776"/>
        <dbReference type="ChEBI" id="CHEBI:597326"/>
        <dbReference type="EC" id="4.3.3.6"/>
    </reaction>
</comment>
<comment type="catalytic activity">
    <reaction evidence="1">
        <text>L-glutamine + H2O = L-glutamate + NH4(+)</text>
        <dbReference type="Rhea" id="RHEA:15889"/>
        <dbReference type="ChEBI" id="CHEBI:15377"/>
        <dbReference type="ChEBI" id="CHEBI:28938"/>
        <dbReference type="ChEBI" id="CHEBI:29985"/>
        <dbReference type="ChEBI" id="CHEBI:58359"/>
        <dbReference type="EC" id="3.5.1.2"/>
    </reaction>
</comment>
<comment type="pathway">
    <text evidence="1">Cofactor biosynthesis; pyridoxal 5'-phosphate biosynthesis.</text>
</comment>
<comment type="subunit">
    <text evidence="1">In the presence of PdxS, forms a dodecamer of heterodimers. Only shows activity in the heterodimer.</text>
</comment>
<comment type="similarity">
    <text evidence="1">Belongs to the glutaminase PdxT/SNO family.</text>
</comment>
<comment type="sequence caution" evidence="2">
    <conflict type="erroneous initiation">
        <sequence resource="EMBL-CDS" id="ABV34324"/>
    </conflict>
</comment>
<reference key="1">
    <citation type="submission" date="2007-08" db="EMBL/GenBank/DDBJ databases">
        <title>Complete sequence of Thermotoga lettingae TMO.</title>
        <authorList>
            <consortium name="US DOE Joint Genome Institute"/>
            <person name="Copeland A."/>
            <person name="Lucas S."/>
            <person name="Lapidus A."/>
            <person name="Barry K."/>
            <person name="Glavina del Rio T."/>
            <person name="Dalin E."/>
            <person name="Tice H."/>
            <person name="Pitluck S."/>
            <person name="Foster B."/>
            <person name="Bruce D."/>
            <person name="Schmutz J."/>
            <person name="Larimer F."/>
            <person name="Land M."/>
            <person name="Hauser L."/>
            <person name="Kyrpides N."/>
            <person name="Mikhailova N."/>
            <person name="Nelson K."/>
            <person name="Gogarten J.P."/>
            <person name="Noll K."/>
            <person name="Richardson P."/>
        </authorList>
    </citation>
    <scope>NUCLEOTIDE SEQUENCE [LARGE SCALE GENOMIC DNA]</scope>
    <source>
        <strain>ATCC BAA-301 / DSM 14385 / NBRC 107922 / TMO</strain>
    </source>
</reference>
<feature type="chain" id="PRO_0000335573" description="Pyridoxal 5'-phosphate synthase subunit PdxT">
    <location>
        <begin position="1"/>
        <end position="195"/>
    </location>
</feature>
<feature type="active site" description="Nucleophile" evidence="1">
    <location>
        <position position="78"/>
    </location>
</feature>
<feature type="active site" description="Charge relay system" evidence="1">
    <location>
        <position position="170"/>
    </location>
</feature>
<feature type="active site" description="Charge relay system" evidence="1">
    <location>
        <position position="172"/>
    </location>
</feature>
<feature type="binding site" evidence="1">
    <location>
        <begin position="46"/>
        <end position="48"/>
    </location>
    <ligand>
        <name>L-glutamine</name>
        <dbReference type="ChEBI" id="CHEBI:58359"/>
    </ligand>
</feature>
<feature type="binding site" evidence="1">
    <location>
        <position position="106"/>
    </location>
    <ligand>
        <name>L-glutamine</name>
        <dbReference type="ChEBI" id="CHEBI:58359"/>
    </ligand>
</feature>
<feature type="binding site" evidence="1">
    <location>
        <begin position="134"/>
        <end position="135"/>
    </location>
    <ligand>
        <name>L-glutamine</name>
        <dbReference type="ChEBI" id="CHEBI:58359"/>
    </ligand>
</feature>
<protein>
    <recommendedName>
        <fullName evidence="1">Pyridoxal 5'-phosphate synthase subunit PdxT</fullName>
        <ecNumber evidence="1">4.3.3.6</ecNumber>
    </recommendedName>
    <alternativeName>
        <fullName evidence="1">Pdx2</fullName>
    </alternativeName>
    <alternativeName>
        <fullName evidence="1">Pyridoxal 5'-phosphate synthase glutaminase subunit</fullName>
        <ecNumber evidence="1">3.5.1.2</ecNumber>
    </alternativeName>
</protein>
<keyword id="KW-0315">Glutamine amidotransferase</keyword>
<keyword id="KW-0378">Hydrolase</keyword>
<keyword id="KW-0456">Lyase</keyword>
<keyword id="KW-0663">Pyridoxal phosphate</keyword>
<keyword id="KW-1185">Reference proteome</keyword>
<organism>
    <name type="scientific">Pseudothermotoga lettingae (strain ATCC BAA-301 / DSM 14385 / NBRC 107922 / TMO)</name>
    <name type="common">Thermotoga lettingae</name>
    <dbReference type="NCBI Taxonomy" id="416591"/>
    <lineage>
        <taxon>Bacteria</taxon>
        <taxon>Thermotogati</taxon>
        <taxon>Thermotogota</taxon>
        <taxon>Thermotogae</taxon>
        <taxon>Thermotogales</taxon>
        <taxon>Thermotogaceae</taxon>
        <taxon>Pseudothermotoga</taxon>
    </lineage>
</organism>
<gene>
    <name evidence="1" type="primary">pdxT</name>
    <name type="ordered locus">Tlet_1770</name>
</gene>
<name>PDXT_PSELT</name>